<name>DAPB_GEOSM</name>
<proteinExistence type="inferred from homology"/>
<evidence type="ECO:0000255" key="1">
    <source>
        <dbReference type="HAMAP-Rule" id="MF_00102"/>
    </source>
</evidence>
<evidence type="ECO:0000305" key="2"/>
<dbReference type="EC" id="1.17.1.8" evidence="1"/>
<dbReference type="EMBL" id="CP001661">
    <property type="protein sequence ID" value="ACT20158.1"/>
    <property type="molecule type" value="Genomic_DNA"/>
</dbReference>
<dbReference type="SMR" id="C6E9Q8"/>
<dbReference type="STRING" id="443144.GM21_4143"/>
<dbReference type="KEGG" id="gem:GM21_4143"/>
<dbReference type="eggNOG" id="COG0289">
    <property type="taxonomic scope" value="Bacteria"/>
</dbReference>
<dbReference type="HOGENOM" id="CLU_047479_2_1_7"/>
<dbReference type="OrthoDB" id="9790352at2"/>
<dbReference type="UniPathway" id="UPA00034">
    <property type="reaction ID" value="UER00018"/>
</dbReference>
<dbReference type="GO" id="GO:0005829">
    <property type="term" value="C:cytosol"/>
    <property type="evidence" value="ECO:0007669"/>
    <property type="project" value="TreeGrafter"/>
</dbReference>
<dbReference type="GO" id="GO:0008839">
    <property type="term" value="F:4-hydroxy-tetrahydrodipicolinate reductase"/>
    <property type="evidence" value="ECO:0007669"/>
    <property type="project" value="UniProtKB-EC"/>
</dbReference>
<dbReference type="GO" id="GO:0051287">
    <property type="term" value="F:NAD binding"/>
    <property type="evidence" value="ECO:0007669"/>
    <property type="project" value="UniProtKB-UniRule"/>
</dbReference>
<dbReference type="GO" id="GO:0050661">
    <property type="term" value="F:NADP binding"/>
    <property type="evidence" value="ECO:0007669"/>
    <property type="project" value="UniProtKB-UniRule"/>
</dbReference>
<dbReference type="GO" id="GO:0016726">
    <property type="term" value="F:oxidoreductase activity, acting on CH or CH2 groups, NAD or NADP as acceptor"/>
    <property type="evidence" value="ECO:0007669"/>
    <property type="project" value="UniProtKB-UniRule"/>
</dbReference>
<dbReference type="GO" id="GO:0019877">
    <property type="term" value="P:diaminopimelate biosynthetic process"/>
    <property type="evidence" value="ECO:0007669"/>
    <property type="project" value="UniProtKB-UniRule"/>
</dbReference>
<dbReference type="GO" id="GO:0009089">
    <property type="term" value="P:lysine biosynthetic process via diaminopimelate"/>
    <property type="evidence" value="ECO:0007669"/>
    <property type="project" value="UniProtKB-UniRule"/>
</dbReference>
<dbReference type="CDD" id="cd02274">
    <property type="entry name" value="DHDPR_N"/>
    <property type="match status" value="1"/>
</dbReference>
<dbReference type="FunFam" id="3.30.360.10:FF:000004">
    <property type="entry name" value="4-hydroxy-tetrahydrodipicolinate reductase"/>
    <property type="match status" value="1"/>
</dbReference>
<dbReference type="FunFam" id="3.40.50.720:FF:000048">
    <property type="entry name" value="4-hydroxy-tetrahydrodipicolinate reductase"/>
    <property type="match status" value="1"/>
</dbReference>
<dbReference type="Gene3D" id="3.30.360.10">
    <property type="entry name" value="Dihydrodipicolinate Reductase, domain 2"/>
    <property type="match status" value="1"/>
</dbReference>
<dbReference type="Gene3D" id="3.40.50.720">
    <property type="entry name" value="NAD(P)-binding Rossmann-like Domain"/>
    <property type="match status" value="1"/>
</dbReference>
<dbReference type="HAMAP" id="MF_00102">
    <property type="entry name" value="DapB"/>
    <property type="match status" value="1"/>
</dbReference>
<dbReference type="InterPro" id="IPR022663">
    <property type="entry name" value="DapB_C"/>
</dbReference>
<dbReference type="InterPro" id="IPR000846">
    <property type="entry name" value="DapB_N"/>
</dbReference>
<dbReference type="InterPro" id="IPR022664">
    <property type="entry name" value="DapB_N_CS"/>
</dbReference>
<dbReference type="InterPro" id="IPR023940">
    <property type="entry name" value="DHDPR_bac"/>
</dbReference>
<dbReference type="InterPro" id="IPR036291">
    <property type="entry name" value="NAD(P)-bd_dom_sf"/>
</dbReference>
<dbReference type="NCBIfam" id="TIGR00036">
    <property type="entry name" value="dapB"/>
    <property type="match status" value="1"/>
</dbReference>
<dbReference type="PANTHER" id="PTHR20836:SF0">
    <property type="entry name" value="4-HYDROXY-TETRAHYDRODIPICOLINATE REDUCTASE 1, CHLOROPLASTIC-RELATED"/>
    <property type="match status" value="1"/>
</dbReference>
<dbReference type="PANTHER" id="PTHR20836">
    <property type="entry name" value="DIHYDRODIPICOLINATE REDUCTASE"/>
    <property type="match status" value="1"/>
</dbReference>
<dbReference type="Pfam" id="PF05173">
    <property type="entry name" value="DapB_C"/>
    <property type="match status" value="1"/>
</dbReference>
<dbReference type="Pfam" id="PF01113">
    <property type="entry name" value="DapB_N"/>
    <property type="match status" value="1"/>
</dbReference>
<dbReference type="PIRSF" id="PIRSF000161">
    <property type="entry name" value="DHPR"/>
    <property type="match status" value="1"/>
</dbReference>
<dbReference type="SUPFAM" id="SSF55347">
    <property type="entry name" value="Glyceraldehyde-3-phosphate dehydrogenase-like, C-terminal domain"/>
    <property type="match status" value="1"/>
</dbReference>
<dbReference type="SUPFAM" id="SSF51735">
    <property type="entry name" value="NAD(P)-binding Rossmann-fold domains"/>
    <property type="match status" value="1"/>
</dbReference>
<dbReference type="PROSITE" id="PS01298">
    <property type="entry name" value="DAPB"/>
    <property type="match status" value="1"/>
</dbReference>
<sequence length="267" mass="28414">MVKIAVCGAAGRMGGRIIAAVKEAEGVEICGALERPGHPMVGQDAGYNAGLGAIGVAISDDLNAVVQACDVLIDFTAPKVSLKNLEVCALYGKSIVIGSTGFTPEERALAAELARDIPVIIAPNMSVGVNVCFKVLADVAKILGEDFDVEIVESHHRLKKDSPSGTAVRMGEVVAGALGRDYNKVANYHREGICGERTHDEIGMQTVRGGDIVGEHTVYFIGMGERIEITHRAHTRDMFSRGSVRAAKWVVTAKQGVYDMQDVLGLR</sequence>
<reference key="1">
    <citation type="submission" date="2009-07" db="EMBL/GenBank/DDBJ databases">
        <title>Complete sequence of Geobacter sp. M21.</title>
        <authorList>
            <consortium name="US DOE Joint Genome Institute"/>
            <person name="Lucas S."/>
            <person name="Copeland A."/>
            <person name="Lapidus A."/>
            <person name="Glavina del Rio T."/>
            <person name="Dalin E."/>
            <person name="Tice H."/>
            <person name="Bruce D."/>
            <person name="Goodwin L."/>
            <person name="Pitluck S."/>
            <person name="Saunders E."/>
            <person name="Brettin T."/>
            <person name="Detter J.C."/>
            <person name="Han C."/>
            <person name="Larimer F."/>
            <person name="Land M."/>
            <person name="Hauser L."/>
            <person name="Kyrpides N."/>
            <person name="Ovchinnikova G."/>
            <person name="Lovley D."/>
        </authorList>
    </citation>
    <scope>NUCLEOTIDE SEQUENCE [LARGE SCALE GENOMIC DNA]</scope>
    <source>
        <strain>M21</strain>
    </source>
</reference>
<comment type="function">
    <text evidence="1">Catalyzes the conversion of 4-hydroxy-tetrahydrodipicolinate (HTPA) to tetrahydrodipicolinate.</text>
</comment>
<comment type="catalytic activity">
    <reaction evidence="1">
        <text>(S)-2,3,4,5-tetrahydrodipicolinate + NAD(+) + H2O = (2S,4S)-4-hydroxy-2,3,4,5-tetrahydrodipicolinate + NADH + H(+)</text>
        <dbReference type="Rhea" id="RHEA:35323"/>
        <dbReference type="ChEBI" id="CHEBI:15377"/>
        <dbReference type="ChEBI" id="CHEBI:15378"/>
        <dbReference type="ChEBI" id="CHEBI:16845"/>
        <dbReference type="ChEBI" id="CHEBI:57540"/>
        <dbReference type="ChEBI" id="CHEBI:57945"/>
        <dbReference type="ChEBI" id="CHEBI:67139"/>
        <dbReference type="EC" id="1.17.1.8"/>
    </reaction>
</comment>
<comment type="catalytic activity">
    <reaction evidence="1">
        <text>(S)-2,3,4,5-tetrahydrodipicolinate + NADP(+) + H2O = (2S,4S)-4-hydroxy-2,3,4,5-tetrahydrodipicolinate + NADPH + H(+)</text>
        <dbReference type="Rhea" id="RHEA:35331"/>
        <dbReference type="ChEBI" id="CHEBI:15377"/>
        <dbReference type="ChEBI" id="CHEBI:15378"/>
        <dbReference type="ChEBI" id="CHEBI:16845"/>
        <dbReference type="ChEBI" id="CHEBI:57783"/>
        <dbReference type="ChEBI" id="CHEBI:58349"/>
        <dbReference type="ChEBI" id="CHEBI:67139"/>
        <dbReference type="EC" id="1.17.1.8"/>
    </reaction>
</comment>
<comment type="pathway">
    <text evidence="1">Amino-acid biosynthesis; L-lysine biosynthesis via DAP pathway; (S)-tetrahydrodipicolinate from L-aspartate: step 4/4.</text>
</comment>
<comment type="subcellular location">
    <subcellularLocation>
        <location evidence="1">Cytoplasm</location>
    </subcellularLocation>
</comment>
<comment type="similarity">
    <text evidence="1">Belongs to the DapB family.</text>
</comment>
<comment type="caution">
    <text evidence="2">Was originally thought to be a dihydrodipicolinate reductase (DHDPR), catalyzing the conversion of dihydrodipicolinate to tetrahydrodipicolinate. However, it was shown in E.coli that the substrate of the enzymatic reaction is not dihydrodipicolinate (DHDP) but in fact (2S,4S)-4-hydroxy-2,3,4,5-tetrahydrodipicolinic acid (HTPA), the product released by the DapA-catalyzed reaction.</text>
</comment>
<protein>
    <recommendedName>
        <fullName evidence="1">4-hydroxy-tetrahydrodipicolinate reductase</fullName>
        <shortName evidence="1">HTPA reductase</shortName>
        <ecNumber evidence="1">1.17.1.8</ecNumber>
    </recommendedName>
</protein>
<gene>
    <name evidence="1" type="primary">dapB</name>
    <name type="ordered locus">GM21_4143</name>
</gene>
<accession>C6E9Q8</accession>
<feature type="chain" id="PRO_1000202813" description="4-hydroxy-tetrahydrodipicolinate reductase">
    <location>
        <begin position="1"/>
        <end position="267"/>
    </location>
</feature>
<feature type="active site" description="Proton donor/acceptor" evidence="1">
    <location>
        <position position="155"/>
    </location>
</feature>
<feature type="active site" description="Proton donor" evidence="1">
    <location>
        <position position="159"/>
    </location>
</feature>
<feature type="binding site" evidence="1">
    <location>
        <begin position="8"/>
        <end position="13"/>
    </location>
    <ligand>
        <name>NAD(+)</name>
        <dbReference type="ChEBI" id="CHEBI:57540"/>
    </ligand>
</feature>
<feature type="binding site" evidence="1">
    <location>
        <position position="34"/>
    </location>
    <ligand>
        <name>NAD(+)</name>
        <dbReference type="ChEBI" id="CHEBI:57540"/>
    </ligand>
</feature>
<feature type="binding site" evidence="1">
    <location>
        <position position="35"/>
    </location>
    <ligand>
        <name>NADP(+)</name>
        <dbReference type="ChEBI" id="CHEBI:58349"/>
    </ligand>
</feature>
<feature type="binding site" evidence="1">
    <location>
        <begin position="98"/>
        <end position="100"/>
    </location>
    <ligand>
        <name>NAD(+)</name>
        <dbReference type="ChEBI" id="CHEBI:57540"/>
    </ligand>
</feature>
<feature type="binding site" evidence="1">
    <location>
        <begin position="122"/>
        <end position="125"/>
    </location>
    <ligand>
        <name>NAD(+)</name>
        <dbReference type="ChEBI" id="CHEBI:57540"/>
    </ligand>
</feature>
<feature type="binding site" evidence="1">
    <location>
        <position position="156"/>
    </location>
    <ligand>
        <name>(S)-2,3,4,5-tetrahydrodipicolinate</name>
        <dbReference type="ChEBI" id="CHEBI:16845"/>
    </ligand>
</feature>
<feature type="binding site" evidence="1">
    <location>
        <begin position="165"/>
        <end position="166"/>
    </location>
    <ligand>
        <name>(S)-2,3,4,5-tetrahydrodipicolinate</name>
        <dbReference type="ChEBI" id="CHEBI:16845"/>
    </ligand>
</feature>
<organism>
    <name type="scientific">Geobacter sp. (strain M21)</name>
    <dbReference type="NCBI Taxonomy" id="443144"/>
    <lineage>
        <taxon>Bacteria</taxon>
        <taxon>Pseudomonadati</taxon>
        <taxon>Thermodesulfobacteriota</taxon>
        <taxon>Desulfuromonadia</taxon>
        <taxon>Geobacterales</taxon>
        <taxon>Geobacteraceae</taxon>
        <taxon>Geobacter</taxon>
    </lineage>
</organism>
<keyword id="KW-0028">Amino-acid biosynthesis</keyword>
<keyword id="KW-0963">Cytoplasm</keyword>
<keyword id="KW-0220">Diaminopimelate biosynthesis</keyword>
<keyword id="KW-0457">Lysine biosynthesis</keyword>
<keyword id="KW-0520">NAD</keyword>
<keyword id="KW-0521">NADP</keyword>
<keyword id="KW-0560">Oxidoreductase</keyword>